<proteinExistence type="inferred from homology"/>
<feature type="chain" id="PRO_0000290329" description="Envelope small membrane protein">
    <location>
        <begin position="1"/>
        <end position="82"/>
    </location>
</feature>
<feature type="topological domain" description="Virion surface" evidence="1">
    <location>
        <begin position="1"/>
        <end position="16"/>
    </location>
</feature>
<feature type="transmembrane region" description="Helical" evidence="1">
    <location>
        <begin position="17"/>
        <end position="37"/>
    </location>
</feature>
<feature type="topological domain" description="Intravirion" evidence="1">
    <location>
        <begin position="38"/>
        <end position="78"/>
    </location>
</feature>
<protein>
    <recommendedName>
        <fullName evidence="1">Envelope small membrane protein</fullName>
        <shortName evidence="1">E protein</shortName>
        <shortName evidence="1">sM protein</shortName>
    </recommendedName>
</protein>
<reference key="1">
    <citation type="journal article" date="2007" name="J. Virol.">
        <title>Comparative analysis of twelve genomes of three novel group 2c and group 2d coronaviruses reveals unique group and subgroup features.</title>
        <authorList>
            <person name="Woo P.C.Y."/>
            <person name="Wang M."/>
            <person name="Lau S.K.P."/>
            <person name="Xu H.F."/>
            <person name="Poon R.W.S."/>
            <person name="Guo R."/>
            <person name="Wong B.H.L."/>
            <person name="Gao K."/>
            <person name="Tsoi H.-W."/>
            <person name="Huang Y."/>
            <person name="Li K.S.M."/>
            <person name="Lam C.S.F."/>
            <person name="Chan K.-H."/>
            <person name="Zheng B.-J."/>
            <person name="Yuen K.-Y."/>
        </authorList>
    </citation>
    <scope>NUCLEOTIDE SEQUENCE [GENOMIC RNA]</scope>
    <source>
        <strain>Isolate HKU5-1</strain>
    </source>
</reference>
<dbReference type="EMBL" id="EF065509">
    <property type="protein sequence ID" value="ABN10880.1"/>
    <property type="molecule type" value="Genomic_RNA"/>
</dbReference>
<dbReference type="RefSeq" id="YP_001039967.1">
    <property type="nucleotide sequence ID" value="NC_009020.1"/>
</dbReference>
<dbReference type="IntAct" id="A3EXD5">
    <property type="interactions" value="1"/>
</dbReference>
<dbReference type="MINT" id="A3EXD5"/>
<dbReference type="GeneID" id="4836008"/>
<dbReference type="KEGG" id="vg:4836008"/>
<dbReference type="OrthoDB" id="24088at10239"/>
<dbReference type="Proteomes" id="UP000007451">
    <property type="component" value="Segment"/>
</dbReference>
<dbReference type="GO" id="GO:0044178">
    <property type="term" value="C:host cell Golgi membrane"/>
    <property type="evidence" value="ECO:0007669"/>
    <property type="project" value="UniProtKB-SubCell"/>
</dbReference>
<dbReference type="GO" id="GO:0016020">
    <property type="term" value="C:membrane"/>
    <property type="evidence" value="ECO:0007669"/>
    <property type="project" value="UniProtKB-UniRule"/>
</dbReference>
<dbReference type="GO" id="GO:0140975">
    <property type="term" value="P:disruption of cellular anatomical structure in another organism"/>
    <property type="evidence" value="ECO:0007669"/>
    <property type="project" value="UniProtKB-UniRule"/>
</dbReference>
<dbReference type="GO" id="GO:0046760">
    <property type="term" value="P:viral budding from Golgi membrane"/>
    <property type="evidence" value="ECO:0007669"/>
    <property type="project" value="UniProtKB-UniRule"/>
</dbReference>
<dbReference type="Gene3D" id="6.10.250.1810">
    <property type="match status" value="1"/>
</dbReference>
<dbReference type="HAMAP" id="MF_04204">
    <property type="entry name" value="BETA_CORONA_E"/>
    <property type="match status" value="1"/>
</dbReference>
<dbReference type="InterPro" id="IPR043506">
    <property type="entry name" value="E_protein_bCoV"/>
</dbReference>
<dbReference type="InterPro" id="IPR003873">
    <property type="entry name" value="E_protein_CoV"/>
</dbReference>
<dbReference type="Pfam" id="PF02723">
    <property type="entry name" value="CoV_E"/>
    <property type="match status" value="1"/>
</dbReference>
<dbReference type="PROSITE" id="PS51926">
    <property type="entry name" value="COV_E"/>
    <property type="match status" value="1"/>
</dbReference>
<organismHost>
    <name type="scientific">Pipistrellus abramus</name>
    <name type="common">Japanese pipistrelle</name>
    <name type="synonym">Pipistrellus javanicus abramus</name>
    <dbReference type="NCBI Taxonomy" id="105295"/>
</organismHost>
<evidence type="ECO:0000255" key="1">
    <source>
        <dbReference type="HAMAP-Rule" id="MF_04204"/>
    </source>
</evidence>
<comment type="function">
    <text evidence="1">Plays a central role in virus morphogenesis and assembly. Acts as a viroporin and self-assembles in host membranes forming pentameric protein-lipid pores that allow ion transport. Also plays a role in the induction of apoptosis.</text>
</comment>
<comment type="subunit">
    <text evidence="1">Homopentamer. Interacts with membrane protein M in the budding compartment of the host cell, which is located between endoplasmic reticulum and the Golgi complex. Interacts with Nucleoprotein.</text>
</comment>
<comment type="subcellular location">
    <subcellularLocation>
        <location evidence="1">Host Golgi apparatus membrane</location>
        <topology evidence="1">Single-pass type III membrane protein</topology>
    </subcellularLocation>
    <text evidence="1">The cytoplasmic tail functions as a Golgi complex-targeting signal.</text>
</comment>
<comment type="similarity">
    <text evidence="1">Belongs to the betacoronaviruses E protein family.</text>
</comment>
<organism>
    <name type="scientific">Bat coronavirus HKU5</name>
    <name type="common">BtCoV</name>
    <name type="synonym">BtCoV/HKU5/2004</name>
    <dbReference type="NCBI Taxonomy" id="694008"/>
    <lineage>
        <taxon>Viruses</taxon>
        <taxon>Riboviria</taxon>
        <taxon>Orthornavirae</taxon>
        <taxon>Pisuviricota</taxon>
        <taxon>Pisoniviricetes</taxon>
        <taxon>Nidovirales</taxon>
        <taxon>Cornidovirineae</taxon>
        <taxon>Coronaviridae</taxon>
        <taxon>Orthocoronavirinae</taxon>
        <taxon>Betacoronavirus</taxon>
        <taxon>Merbecovirus</taxon>
    </lineage>
</organism>
<gene>
    <name evidence="1" type="primary">E</name>
    <name type="synonym">sM</name>
    <name type="ORF">4</name>
</gene>
<keyword id="KW-0053">Apoptosis</keyword>
<keyword id="KW-1040">Host Golgi apparatus</keyword>
<keyword id="KW-1043">Host membrane</keyword>
<keyword id="KW-0472">Membrane</keyword>
<keyword id="KW-1185">Reference proteome</keyword>
<keyword id="KW-0812">Transmembrane</keyword>
<keyword id="KW-1133">Transmembrane helix</keyword>
<accession>A3EXD5</accession>
<sequence>MLPFVQEQIGAFIVNFFILSVVCAVTLVVCLAILTAIRLCVQCVSGCHTLVFLPAVHIYNTGRAAYVKFQESHPPYPPEDWV</sequence>
<name>VEMP_BCHK5</name>